<sequence length="128" mass="13602">MAVKKSRKRRVKKNIESGVAHIHSTFNNTLVMITDVHGNAVAWSSAGSLGFKGSRKSTPFAAQMASEAAAKGAMEHGMKTVEVAVKGPGSGREAAIRALQTTGLEVTSIKDVTPVPHNGCRPPKRRRV</sequence>
<reference key="1">
    <citation type="journal article" date="2006" name="Proc. Natl. Acad. Sci. U.S.A.">
        <title>Multireplicon genome architecture of Lactobacillus salivarius.</title>
        <authorList>
            <person name="Claesson M.J."/>
            <person name="Li Y."/>
            <person name="Leahy S."/>
            <person name="Canchaya C."/>
            <person name="van Pijkeren J.P."/>
            <person name="Cerdeno-Tarraga A.M."/>
            <person name="Parkhill J."/>
            <person name="Flynn S."/>
            <person name="O'Sullivan G.C."/>
            <person name="Collins J.K."/>
            <person name="Higgins D."/>
            <person name="Shanahan F."/>
            <person name="Fitzgerald G.F."/>
            <person name="van Sinderen D."/>
            <person name="O'Toole P.W."/>
        </authorList>
    </citation>
    <scope>NUCLEOTIDE SEQUENCE [LARGE SCALE GENOMIC DNA]</scope>
    <source>
        <strain>UCC118</strain>
    </source>
</reference>
<evidence type="ECO:0000255" key="1">
    <source>
        <dbReference type="HAMAP-Rule" id="MF_01310"/>
    </source>
</evidence>
<evidence type="ECO:0000305" key="2"/>
<feature type="chain" id="PRO_0000294778" description="Small ribosomal subunit protein uS11">
    <location>
        <begin position="1"/>
        <end position="128"/>
    </location>
</feature>
<organism>
    <name type="scientific">Ligilactobacillus salivarius (strain UCC118)</name>
    <name type="common">Lactobacillus salivarius</name>
    <dbReference type="NCBI Taxonomy" id="362948"/>
    <lineage>
        <taxon>Bacteria</taxon>
        <taxon>Bacillati</taxon>
        <taxon>Bacillota</taxon>
        <taxon>Bacilli</taxon>
        <taxon>Lactobacillales</taxon>
        <taxon>Lactobacillaceae</taxon>
        <taxon>Ligilactobacillus</taxon>
    </lineage>
</organism>
<accession>Q1WSB5</accession>
<comment type="function">
    <text evidence="1">Located on the platform of the 30S subunit, it bridges several disparate RNA helices of the 16S rRNA. Forms part of the Shine-Dalgarno cleft in the 70S ribosome.</text>
</comment>
<comment type="subunit">
    <text evidence="1">Part of the 30S ribosomal subunit. Interacts with proteins S7 and S18. Binds to IF-3.</text>
</comment>
<comment type="similarity">
    <text evidence="1">Belongs to the universal ribosomal protein uS11 family.</text>
</comment>
<protein>
    <recommendedName>
        <fullName evidence="1">Small ribosomal subunit protein uS11</fullName>
    </recommendedName>
    <alternativeName>
        <fullName evidence="2">30S ribosomal protein S11</fullName>
    </alternativeName>
</protein>
<gene>
    <name evidence="1" type="primary">rpsK</name>
    <name type="ordered locus">LSL_1410</name>
</gene>
<name>RS11_LIGS1</name>
<dbReference type="EMBL" id="CP000233">
    <property type="protein sequence ID" value="ABE00214.1"/>
    <property type="molecule type" value="Genomic_DNA"/>
</dbReference>
<dbReference type="RefSeq" id="WP_003701334.1">
    <property type="nucleotide sequence ID" value="NC_007929.1"/>
</dbReference>
<dbReference type="RefSeq" id="YP_536297.1">
    <property type="nucleotide sequence ID" value="NC_007929.1"/>
</dbReference>
<dbReference type="SMR" id="Q1WSB5"/>
<dbReference type="STRING" id="362948.LSL_1410"/>
<dbReference type="GeneID" id="89466145"/>
<dbReference type="KEGG" id="lsl:LSL_1410"/>
<dbReference type="PATRIC" id="fig|362948.14.peg.1493"/>
<dbReference type="HOGENOM" id="CLU_072439_5_0_9"/>
<dbReference type="OrthoDB" id="9806415at2"/>
<dbReference type="Proteomes" id="UP000006559">
    <property type="component" value="Chromosome"/>
</dbReference>
<dbReference type="GO" id="GO:1990904">
    <property type="term" value="C:ribonucleoprotein complex"/>
    <property type="evidence" value="ECO:0007669"/>
    <property type="project" value="UniProtKB-KW"/>
</dbReference>
<dbReference type="GO" id="GO:0005840">
    <property type="term" value="C:ribosome"/>
    <property type="evidence" value="ECO:0007669"/>
    <property type="project" value="UniProtKB-KW"/>
</dbReference>
<dbReference type="GO" id="GO:0019843">
    <property type="term" value="F:rRNA binding"/>
    <property type="evidence" value="ECO:0007669"/>
    <property type="project" value="UniProtKB-UniRule"/>
</dbReference>
<dbReference type="GO" id="GO:0003735">
    <property type="term" value="F:structural constituent of ribosome"/>
    <property type="evidence" value="ECO:0007669"/>
    <property type="project" value="InterPro"/>
</dbReference>
<dbReference type="GO" id="GO:0006412">
    <property type="term" value="P:translation"/>
    <property type="evidence" value="ECO:0007669"/>
    <property type="project" value="UniProtKB-UniRule"/>
</dbReference>
<dbReference type="FunFam" id="3.30.420.80:FF:000001">
    <property type="entry name" value="30S ribosomal protein S11"/>
    <property type="match status" value="1"/>
</dbReference>
<dbReference type="Gene3D" id="3.30.420.80">
    <property type="entry name" value="Ribosomal protein S11"/>
    <property type="match status" value="1"/>
</dbReference>
<dbReference type="HAMAP" id="MF_01310">
    <property type="entry name" value="Ribosomal_uS11"/>
    <property type="match status" value="1"/>
</dbReference>
<dbReference type="InterPro" id="IPR001971">
    <property type="entry name" value="Ribosomal_uS11"/>
</dbReference>
<dbReference type="InterPro" id="IPR019981">
    <property type="entry name" value="Ribosomal_uS11_bac-type"/>
</dbReference>
<dbReference type="InterPro" id="IPR018102">
    <property type="entry name" value="Ribosomal_uS11_CS"/>
</dbReference>
<dbReference type="InterPro" id="IPR036967">
    <property type="entry name" value="Ribosomal_uS11_sf"/>
</dbReference>
<dbReference type="NCBIfam" id="NF003698">
    <property type="entry name" value="PRK05309.1"/>
    <property type="match status" value="1"/>
</dbReference>
<dbReference type="NCBIfam" id="TIGR03632">
    <property type="entry name" value="uS11_bact"/>
    <property type="match status" value="1"/>
</dbReference>
<dbReference type="PANTHER" id="PTHR11759">
    <property type="entry name" value="40S RIBOSOMAL PROTEIN S14/30S RIBOSOMAL PROTEIN S11"/>
    <property type="match status" value="1"/>
</dbReference>
<dbReference type="Pfam" id="PF00411">
    <property type="entry name" value="Ribosomal_S11"/>
    <property type="match status" value="1"/>
</dbReference>
<dbReference type="PIRSF" id="PIRSF002131">
    <property type="entry name" value="Ribosomal_S11"/>
    <property type="match status" value="1"/>
</dbReference>
<dbReference type="SUPFAM" id="SSF53137">
    <property type="entry name" value="Translational machinery components"/>
    <property type="match status" value="1"/>
</dbReference>
<dbReference type="PROSITE" id="PS00054">
    <property type="entry name" value="RIBOSOMAL_S11"/>
    <property type="match status" value="1"/>
</dbReference>
<keyword id="KW-1185">Reference proteome</keyword>
<keyword id="KW-0687">Ribonucleoprotein</keyword>
<keyword id="KW-0689">Ribosomal protein</keyword>
<keyword id="KW-0694">RNA-binding</keyword>
<keyword id="KW-0699">rRNA-binding</keyword>
<proteinExistence type="inferred from homology"/>